<sequence>MINREDLLKNPVEDIALSDLEKYSDIVNVFDKIYGFSSEGIVRGSKILKEMIKDADLRFLSFTANLVSTGLRGLFADLVKRGYFNIIVTTGGTIDHDLARSFGGVYYKGSFDIDDAMLKDLEIHRLGNVLVPFESYGKVIEEIVRKFLPEIAKDKKEIPAYELLWEFGKRISDSNSILRAAYEKKVPVIVPGIVDGSFGTNLFIQSQFLNFKINLFEDMRLIKDLVFSCKKSGALIIGGGISKHHTIWWNQFKDGLDYAVYVTTAQEYDGSLSGAKPREAISWNKIRPNAKHATIYGDATIIVPILAASLLS</sequence>
<accession>C3NHT5</accession>
<proteinExistence type="inferred from homology"/>
<gene>
    <name evidence="1" type="primary">dys</name>
    <name type="ordered locus">YN1551_1607</name>
</gene>
<name>DHYS_SACI1</name>
<comment type="function">
    <text evidence="1">Catalyzes the NAD-dependent oxidative cleavage of spermidine and the subsequent transfer of the butylamine moiety of spermidine to the epsilon-amino group of a specific lysine residue of the eIF-5A precursor protein to form the intermediate deoxyhypusine residue.</text>
</comment>
<comment type="catalytic activity">
    <reaction evidence="1">
        <text>[eIF5A protein]-L-lysine + spermidine = [eIF5A protein]-deoxyhypusine + propane-1,3-diamine</text>
        <dbReference type="Rhea" id="RHEA:33299"/>
        <dbReference type="Rhea" id="RHEA-COMP:10143"/>
        <dbReference type="Rhea" id="RHEA-COMP:10144"/>
        <dbReference type="ChEBI" id="CHEBI:29969"/>
        <dbReference type="ChEBI" id="CHEBI:57484"/>
        <dbReference type="ChEBI" id="CHEBI:57834"/>
        <dbReference type="ChEBI" id="CHEBI:82657"/>
        <dbReference type="EC" id="2.5.1.46"/>
    </reaction>
</comment>
<comment type="cofactor">
    <cofactor evidence="1">
        <name>NAD(+)</name>
        <dbReference type="ChEBI" id="CHEBI:57540"/>
    </cofactor>
</comment>
<comment type="pathway">
    <text evidence="1">Protein modification; eIF5A hypusination.</text>
</comment>
<comment type="similarity">
    <text evidence="1">Belongs to the deoxyhypusine synthase family.</text>
</comment>
<dbReference type="EC" id="2.5.1.46" evidence="1"/>
<dbReference type="EMBL" id="CP001404">
    <property type="protein sequence ID" value="ACP48695.1"/>
    <property type="molecule type" value="Genomic_DNA"/>
</dbReference>
<dbReference type="RefSeq" id="WP_012711264.1">
    <property type="nucleotide sequence ID" value="NC_012623.1"/>
</dbReference>
<dbReference type="SMR" id="C3NHT5"/>
<dbReference type="KEGG" id="sin:YN1551_1607"/>
<dbReference type="HOGENOM" id="CLU_039781_1_0_2"/>
<dbReference type="UniPathway" id="UPA00354"/>
<dbReference type="Proteomes" id="UP000006818">
    <property type="component" value="Chromosome"/>
</dbReference>
<dbReference type="GO" id="GO:0005737">
    <property type="term" value="C:cytoplasm"/>
    <property type="evidence" value="ECO:0007669"/>
    <property type="project" value="TreeGrafter"/>
</dbReference>
<dbReference type="GO" id="GO:0034038">
    <property type="term" value="F:deoxyhypusine synthase activity"/>
    <property type="evidence" value="ECO:0007669"/>
    <property type="project" value="UniProtKB-UniRule"/>
</dbReference>
<dbReference type="FunFam" id="3.40.910.10:FF:000007">
    <property type="entry name" value="Probable deoxyhypusine synthase"/>
    <property type="match status" value="1"/>
</dbReference>
<dbReference type="Gene3D" id="3.40.910.10">
    <property type="entry name" value="Deoxyhypusine synthase"/>
    <property type="match status" value="1"/>
</dbReference>
<dbReference type="HAMAP" id="MF_00153">
    <property type="entry name" value="DHS"/>
    <property type="match status" value="1"/>
</dbReference>
<dbReference type="InterPro" id="IPR022899">
    <property type="entry name" value="Deoxyhypus_synthase_arc"/>
</dbReference>
<dbReference type="InterPro" id="IPR002773">
    <property type="entry name" value="Deoxyhypusine_synthase"/>
</dbReference>
<dbReference type="InterPro" id="IPR036982">
    <property type="entry name" value="Deoxyhypusine_synthase_sf"/>
</dbReference>
<dbReference type="InterPro" id="IPR029035">
    <property type="entry name" value="DHS-like_NAD/FAD-binding_dom"/>
</dbReference>
<dbReference type="NCBIfam" id="NF002294">
    <property type="entry name" value="PRK01221.1"/>
    <property type="match status" value="1"/>
</dbReference>
<dbReference type="PANTHER" id="PTHR11703">
    <property type="entry name" value="DEOXYHYPUSINE SYNTHASE"/>
    <property type="match status" value="1"/>
</dbReference>
<dbReference type="PANTHER" id="PTHR11703:SF0">
    <property type="entry name" value="DEOXYHYPUSINE SYNTHASE"/>
    <property type="match status" value="1"/>
</dbReference>
<dbReference type="Pfam" id="PF01916">
    <property type="entry name" value="DS"/>
    <property type="match status" value="1"/>
</dbReference>
<dbReference type="SUPFAM" id="SSF52467">
    <property type="entry name" value="DHS-like NAD/FAD-binding domain"/>
    <property type="match status" value="1"/>
</dbReference>
<protein>
    <recommendedName>
        <fullName evidence="1">Probable deoxyhypusine synthase</fullName>
        <shortName evidence="1">DHS</shortName>
        <ecNumber evidence="1">2.5.1.46</ecNumber>
    </recommendedName>
</protein>
<evidence type="ECO:0000255" key="1">
    <source>
        <dbReference type="HAMAP-Rule" id="MF_00153"/>
    </source>
</evidence>
<reference key="1">
    <citation type="journal article" date="2009" name="Proc. Natl. Acad. Sci. U.S.A.">
        <title>Biogeography of the Sulfolobus islandicus pan-genome.</title>
        <authorList>
            <person name="Reno M.L."/>
            <person name="Held N.L."/>
            <person name="Fields C.J."/>
            <person name="Burke P.V."/>
            <person name="Whitaker R.J."/>
        </authorList>
    </citation>
    <scope>NUCLEOTIDE SEQUENCE [LARGE SCALE GENOMIC DNA]</scope>
    <source>
        <strain>Y.N.15.51 / Yellowstone #2</strain>
    </source>
</reference>
<organism>
    <name type="scientific">Saccharolobus islandicus (strain Y.N.15.51 / Yellowstone #2)</name>
    <name type="common">Sulfolobus islandicus</name>
    <dbReference type="NCBI Taxonomy" id="419942"/>
    <lineage>
        <taxon>Archaea</taxon>
        <taxon>Thermoproteota</taxon>
        <taxon>Thermoprotei</taxon>
        <taxon>Sulfolobales</taxon>
        <taxon>Sulfolobaceae</taxon>
        <taxon>Saccharolobus</taxon>
    </lineage>
</organism>
<feature type="chain" id="PRO_1000203448" description="Probable deoxyhypusine synthase">
    <location>
        <begin position="1"/>
        <end position="312"/>
    </location>
</feature>
<feature type="active site" description="Nucleophile" evidence="1">
    <location>
        <position position="285"/>
    </location>
</feature>
<keyword id="KW-0386">Hypusine biosynthesis</keyword>
<keyword id="KW-0520">NAD</keyword>
<keyword id="KW-0808">Transferase</keyword>